<protein>
    <recommendedName>
        <fullName evidence="1">Uridylate kinase</fullName>
        <shortName evidence="1">UK</shortName>
        <ecNumber evidence="1">2.7.4.22</ecNumber>
    </recommendedName>
    <alternativeName>
        <fullName evidence="1">Uridine monophosphate kinase</fullName>
        <shortName evidence="1">UMP kinase</shortName>
        <shortName evidence="1">UMPK</shortName>
    </alternativeName>
</protein>
<reference key="1">
    <citation type="journal article" date="1998" name="Nature">
        <title>The complete genome of the hyperthermophilic bacterium Aquifex aeolicus.</title>
        <authorList>
            <person name="Deckert G."/>
            <person name="Warren P.V."/>
            <person name="Gaasterland T."/>
            <person name="Young W.G."/>
            <person name="Lenox A.L."/>
            <person name="Graham D.E."/>
            <person name="Overbeek R."/>
            <person name="Snead M.A."/>
            <person name="Keller M."/>
            <person name="Aujay M."/>
            <person name="Huber R."/>
            <person name="Feldman R.A."/>
            <person name="Short J.M."/>
            <person name="Olsen G.J."/>
            <person name="Swanson R.V."/>
        </authorList>
    </citation>
    <scope>NUCLEOTIDE SEQUENCE [LARGE SCALE GENOMIC DNA]</scope>
    <source>
        <strain>VF5</strain>
    </source>
</reference>
<evidence type="ECO:0000255" key="1">
    <source>
        <dbReference type="HAMAP-Rule" id="MF_01220"/>
    </source>
</evidence>
<feature type="chain" id="PRO_0000143821" description="Uridylate kinase">
    <location>
        <begin position="1"/>
        <end position="240"/>
    </location>
</feature>
<feature type="region of interest" description="Involved in allosteric activation by GTP" evidence="1">
    <location>
        <begin position="21"/>
        <end position="26"/>
    </location>
</feature>
<feature type="binding site" evidence="1">
    <location>
        <begin position="13"/>
        <end position="16"/>
    </location>
    <ligand>
        <name>ATP</name>
        <dbReference type="ChEBI" id="CHEBI:30616"/>
    </ligand>
</feature>
<feature type="binding site" evidence="1">
    <location>
        <position position="55"/>
    </location>
    <ligand>
        <name>UMP</name>
        <dbReference type="ChEBI" id="CHEBI:57865"/>
    </ligand>
</feature>
<feature type="binding site" evidence="1">
    <location>
        <position position="56"/>
    </location>
    <ligand>
        <name>ATP</name>
        <dbReference type="ChEBI" id="CHEBI:30616"/>
    </ligand>
</feature>
<feature type="binding site" evidence="1">
    <location>
        <position position="60"/>
    </location>
    <ligand>
        <name>ATP</name>
        <dbReference type="ChEBI" id="CHEBI:30616"/>
    </ligand>
</feature>
<feature type="binding site" evidence="1">
    <location>
        <position position="75"/>
    </location>
    <ligand>
        <name>UMP</name>
        <dbReference type="ChEBI" id="CHEBI:57865"/>
    </ligand>
</feature>
<feature type="binding site" evidence="1">
    <location>
        <begin position="137"/>
        <end position="144"/>
    </location>
    <ligand>
        <name>UMP</name>
        <dbReference type="ChEBI" id="CHEBI:57865"/>
    </ligand>
</feature>
<feature type="binding site" evidence="1">
    <location>
        <position position="164"/>
    </location>
    <ligand>
        <name>ATP</name>
        <dbReference type="ChEBI" id="CHEBI:30616"/>
    </ligand>
</feature>
<feature type="binding site" evidence="1">
    <location>
        <position position="170"/>
    </location>
    <ligand>
        <name>ATP</name>
        <dbReference type="ChEBI" id="CHEBI:30616"/>
    </ligand>
</feature>
<feature type="binding site" evidence="1">
    <location>
        <position position="173"/>
    </location>
    <ligand>
        <name>ATP</name>
        <dbReference type="ChEBI" id="CHEBI:30616"/>
    </ligand>
</feature>
<organism>
    <name type="scientific">Aquifex aeolicus (strain VF5)</name>
    <dbReference type="NCBI Taxonomy" id="224324"/>
    <lineage>
        <taxon>Bacteria</taxon>
        <taxon>Pseudomonadati</taxon>
        <taxon>Aquificota</taxon>
        <taxon>Aquificia</taxon>
        <taxon>Aquificales</taxon>
        <taxon>Aquificaceae</taxon>
        <taxon>Aquifex</taxon>
    </lineage>
</organism>
<accession>O66929</accession>
<comment type="function">
    <text evidence="1">Catalyzes the reversible phosphorylation of UMP to UDP.</text>
</comment>
<comment type="catalytic activity">
    <reaction evidence="1">
        <text>UMP + ATP = UDP + ADP</text>
        <dbReference type="Rhea" id="RHEA:24400"/>
        <dbReference type="ChEBI" id="CHEBI:30616"/>
        <dbReference type="ChEBI" id="CHEBI:57865"/>
        <dbReference type="ChEBI" id="CHEBI:58223"/>
        <dbReference type="ChEBI" id="CHEBI:456216"/>
        <dbReference type="EC" id="2.7.4.22"/>
    </reaction>
</comment>
<comment type="activity regulation">
    <text evidence="1">Allosterically activated by GTP. Inhibited by UTP.</text>
</comment>
<comment type="pathway">
    <text evidence="1">Pyrimidine metabolism; CTP biosynthesis via de novo pathway; UDP from UMP (UMPK route): step 1/1.</text>
</comment>
<comment type="subunit">
    <text evidence="1">Homohexamer.</text>
</comment>
<comment type="subcellular location">
    <subcellularLocation>
        <location evidence="1">Cytoplasm</location>
    </subcellularLocation>
</comment>
<comment type="similarity">
    <text evidence="1">Belongs to the UMP kinase family.</text>
</comment>
<gene>
    <name evidence="1" type="primary">pyrH</name>
    <name type="ordered locus">aq_713</name>
</gene>
<name>PYRH_AQUAE</name>
<dbReference type="EC" id="2.7.4.22" evidence="1"/>
<dbReference type="EMBL" id="AE000657">
    <property type="protein sequence ID" value="AAC06882.1"/>
    <property type="molecule type" value="Genomic_DNA"/>
</dbReference>
<dbReference type="PIR" id="E70362">
    <property type="entry name" value="E70362"/>
</dbReference>
<dbReference type="RefSeq" id="NP_213489.1">
    <property type="nucleotide sequence ID" value="NC_000918.1"/>
</dbReference>
<dbReference type="RefSeq" id="WP_010880427.1">
    <property type="nucleotide sequence ID" value="NC_000918.1"/>
</dbReference>
<dbReference type="SMR" id="O66929"/>
<dbReference type="FunCoup" id="O66929">
    <property type="interactions" value="508"/>
</dbReference>
<dbReference type="STRING" id="224324.aq_713"/>
<dbReference type="EnsemblBacteria" id="AAC06882">
    <property type="protein sequence ID" value="AAC06882"/>
    <property type="gene ID" value="aq_713"/>
</dbReference>
<dbReference type="KEGG" id="aae:aq_713"/>
<dbReference type="PATRIC" id="fig|224324.8.peg.571"/>
<dbReference type="eggNOG" id="COG0528">
    <property type="taxonomic scope" value="Bacteria"/>
</dbReference>
<dbReference type="HOGENOM" id="CLU_033861_0_0_0"/>
<dbReference type="InParanoid" id="O66929"/>
<dbReference type="OrthoDB" id="9807458at2"/>
<dbReference type="UniPathway" id="UPA00159">
    <property type="reaction ID" value="UER00275"/>
</dbReference>
<dbReference type="Proteomes" id="UP000000798">
    <property type="component" value="Chromosome"/>
</dbReference>
<dbReference type="GO" id="GO:0005737">
    <property type="term" value="C:cytoplasm"/>
    <property type="evidence" value="ECO:0007669"/>
    <property type="project" value="UniProtKB-SubCell"/>
</dbReference>
<dbReference type="GO" id="GO:0005524">
    <property type="term" value="F:ATP binding"/>
    <property type="evidence" value="ECO:0007669"/>
    <property type="project" value="UniProtKB-KW"/>
</dbReference>
<dbReference type="GO" id="GO:0033862">
    <property type="term" value="F:UMP kinase activity"/>
    <property type="evidence" value="ECO:0000318"/>
    <property type="project" value="GO_Central"/>
</dbReference>
<dbReference type="GO" id="GO:0044210">
    <property type="term" value="P:'de novo' CTP biosynthetic process"/>
    <property type="evidence" value="ECO:0007669"/>
    <property type="project" value="UniProtKB-UniRule"/>
</dbReference>
<dbReference type="GO" id="GO:0006225">
    <property type="term" value="P:UDP biosynthetic process"/>
    <property type="evidence" value="ECO:0000318"/>
    <property type="project" value="GO_Central"/>
</dbReference>
<dbReference type="CDD" id="cd04254">
    <property type="entry name" value="AAK_UMPK-PyrH-Ec"/>
    <property type="match status" value="1"/>
</dbReference>
<dbReference type="FunFam" id="3.40.1160.10:FF:000001">
    <property type="entry name" value="Uridylate kinase"/>
    <property type="match status" value="1"/>
</dbReference>
<dbReference type="Gene3D" id="3.40.1160.10">
    <property type="entry name" value="Acetylglutamate kinase-like"/>
    <property type="match status" value="1"/>
</dbReference>
<dbReference type="HAMAP" id="MF_01220_B">
    <property type="entry name" value="PyrH_B"/>
    <property type="match status" value="1"/>
</dbReference>
<dbReference type="InterPro" id="IPR036393">
    <property type="entry name" value="AceGlu_kinase-like_sf"/>
</dbReference>
<dbReference type="InterPro" id="IPR001048">
    <property type="entry name" value="Asp/Glu/Uridylate_kinase"/>
</dbReference>
<dbReference type="InterPro" id="IPR011817">
    <property type="entry name" value="Uridylate_kinase"/>
</dbReference>
<dbReference type="InterPro" id="IPR015963">
    <property type="entry name" value="Uridylate_kinase_bac"/>
</dbReference>
<dbReference type="NCBIfam" id="TIGR02075">
    <property type="entry name" value="pyrH_bact"/>
    <property type="match status" value="1"/>
</dbReference>
<dbReference type="PANTHER" id="PTHR42833">
    <property type="entry name" value="URIDYLATE KINASE"/>
    <property type="match status" value="1"/>
</dbReference>
<dbReference type="PANTHER" id="PTHR42833:SF4">
    <property type="entry name" value="URIDYLATE KINASE PUMPKIN, CHLOROPLASTIC"/>
    <property type="match status" value="1"/>
</dbReference>
<dbReference type="Pfam" id="PF00696">
    <property type="entry name" value="AA_kinase"/>
    <property type="match status" value="1"/>
</dbReference>
<dbReference type="PIRSF" id="PIRSF005650">
    <property type="entry name" value="Uridylate_kin"/>
    <property type="match status" value="1"/>
</dbReference>
<dbReference type="SUPFAM" id="SSF53633">
    <property type="entry name" value="Carbamate kinase-like"/>
    <property type="match status" value="1"/>
</dbReference>
<sequence>MEEKPKYKRILLKLSGEAFAGEQGYGIDPAFLEYISHEIKNVYDLGVQVAIVIGGGNIFRGFQGKEIGVDRATADYMGMLATVINALALQSALENHVNIPTRVLSAIEMRQVAEPYIRRRAIRHLEKGRIVIFAGGTGNPFFSTDTAAALRAAEIGAEVLIKATKVGGIYDKDPEKYPDAVLIKEISYLEVINMGLKVMDHTALTLCKENEIPIIVLNVKEKGNLRRAVLGEEVGSVVRG</sequence>
<proteinExistence type="inferred from homology"/>
<keyword id="KW-0021">Allosteric enzyme</keyword>
<keyword id="KW-0067">ATP-binding</keyword>
<keyword id="KW-0963">Cytoplasm</keyword>
<keyword id="KW-0418">Kinase</keyword>
<keyword id="KW-0547">Nucleotide-binding</keyword>
<keyword id="KW-0665">Pyrimidine biosynthesis</keyword>
<keyword id="KW-1185">Reference proteome</keyword>
<keyword id="KW-0808">Transferase</keyword>